<dbReference type="EC" id="2.1.1.386" evidence="3 4"/>
<dbReference type="EMBL" id="AE013599">
    <property type="protein sequence ID" value="AAF58575.2"/>
    <property type="molecule type" value="Genomic_DNA"/>
</dbReference>
<dbReference type="EMBL" id="AY069325">
    <property type="protein sequence ID" value="AAL39470.1"/>
    <property type="molecule type" value="mRNA"/>
</dbReference>
<dbReference type="RefSeq" id="NP_610732.1">
    <property type="nucleotide sequence ID" value="NM_136888.3"/>
</dbReference>
<dbReference type="SMR" id="Q7K175"/>
<dbReference type="BioGRID" id="62083">
    <property type="interactions" value="4"/>
</dbReference>
<dbReference type="FunCoup" id="Q7K175">
    <property type="interactions" value="753"/>
</dbReference>
<dbReference type="STRING" id="7227.FBpp0087092"/>
<dbReference type="PaxDb" id="7227-FBpp0087092"/>
<dbReference type="DNASU" id="36301"/>
<dbReference type="EnsemblMetazoa" id="FBtr0087984">
    <property type="protein sequence ID" value="FBpp0087092"/>
    <property type="gene ID" value="FBgn0033686"/>
</dbReference>
<dbReference type="GeneID" id="36301"/>
<dbReference type="KEGG" id="dme:Dmel_CG12367"/>
<dbReference type="UCSC" id="CG12367-RA">
    <property type="organism name" value="d. melanogaster"/>
</dbReference>
<dbReference type="AGR" id="FB:FBgn0033686"/>
<dbReference type="CTD" id="36301"/>
<dbReference type="FlyBase" id="FBgn0033686">
    <property type="gene designation" value="Hen1"/>
</dbReference>
<dbReference type="VEuPathDB" id="VectorBase:FBgn0033686"/>
<dbReference type="eggNOG" id="KOG1045">
    <property type="taxonomic scope" value="Eukaryota"/>
</dbReference>
<dbReference type="GeneTree" id="ENSGT00390000004798"/>
<dbReference type="HOGENOM" id="CLU_044646_1_0_1"/>
<dbReference type="InParanoid" id="Q7K175"/>
<dbReference type="OMA" id="YEQRYCA"/>
<dbReference type="OrthoDB" id="2154311at2759"/>
<dbReference type="PhylomeDB" id="Q7K175"/>
<dbReference type="BioGRID-ORCS" id="36301">
    <property type="hits" value="0 hits in 1 CRISPR screen"/>
</dbReference>
<dbReference type="GenomeRNAi" id="36301"/>
<dbReference type="PRO" id="PR:Q7K175"/>
<dbReference type="Proteomes" id="UP000000803">
    <property type="component" value="Chromosome 2R"/>
</dbReference>
<dbReference type="Bgee" id="FBgn0033686">
    <property type="expression patterns" value="Expressed in adult middle midgut class II enteroendocrine cell in adult midgut (Drosophila) and 37 other cell types or tissues"/>
</dbReference>
<dbReference type="GO" id="GO:0005737">
    <property type="term" value="C:cytoplasm"/>
    <property type="evidence" value="ECO:0000318"/>
    <property type="project" value="GO_Central"/>
</dbReference>
<dbReference type="GO" id="GO:0005634">
    <property type="term" value="C:nucleus"/>
    <property type="evidence" value="ECO:0000318"/>
    <property type="project" value="GO_Central"/>
</dbReference>
<dbReference type="GO" id="GO:0046872">
    <property type="term" value="F:metal ion binding"/>
    <property type="evidence" value="ECO:0007669"/>
    <property type="project" value="UniProtKB-KW"/>
</dbReference>
<dbReference type="GO" id="GO:0008171">
    <property type="term" value="F:O-methyltransferase activity"/>
    <property type="evidence" value="ECO:0000318"/>
    <property type="project" value="GO_Central"/>
</dbReference>
<dbReference type="GO" id="GO:0003723">
    <property type="term" value="F:RNA binding"/>
    <property type="evidence" value="ECO:0007669"/>
    <property type="project" value="UniProtKB-KW"/>
</dbReference>
<dbReference type="GO" id="GO:0008173">
    <property type="term" value="F:RNA methyltransferase activity"/>
    <property type="evidence" value="ECO:0000318"/>
    <property type="project" value="GO_Central"/>
</dbReference>
<dbReference type="GO" id="GO:0090486">
    <property type="term" value="F:small RNA 2'-O-methyltransferase activity"/>
    <property type="evidence" value="ECO:0000314"/>
    <property type="project" value="FlyBase"/>
</dbReference>
<dbReference type="GO" id="GO:0034587">
    <property type="term" value="P:piRNA processing"/>
    <property type="evidence" value="ECO:0000314"/>
    <property type="project" value="UniProtKB"/>
</dbReference>
<dbReference type="GO" id="GO:0140990">
    <property type="term" value="P:primary piRNA processing"/>
    <property type="evidence" value="ECO:0000304"/>
    <property type="project" value="FlyBase"/>
</dbReference>
<dbReference type="GO" id="GO:0001510">
    <property type="term" value="P:RNA methylation"/>
    <property type="evidence" value="ECO:0000314"/>
    <property type="project" value="FlyBase"/>
</dbReference>
<dbReference type="GO" id="GO:0140965">
    <property type="term" value="P:secondary piRNA processing"/>
    <property type="evidence" value="ECO:0000304"/>
    <property type="project" value="FlyBase"/>
</dbReference>
<dbReference type="GO" id="GO:0030422">
    <property type="term" value="P:siRNA processing"/>
    <property type="evidence" value="ECO:0000314"/>
    <property type="project" value="UniProtKB"/>
</dbReference>
<dbReference type="GO" id="GO:0010526">
    <property type="term" value="P:transposable element silencing"/>
    <property type="evidence" value="ECO:0000315"/>
    <property type="project" value="FlyBase"/>
</dbReference>
<dbReference type="FunFam" id="3.40.50.150:FF:000124">
    <property type="entry name" value="HEN methyltransferase 1"/>
    <property type="match status" value="1"/>
</dbReference>
<dbReference type="Gene3D" id="3.40.50.150">
    <property type="entry name" value="Vaccinia Virus protein VP39"/>
    <property type="match status" value="1"/>
</dbReference>
<dbReference type="InterPro" id="IPR026610">
    <property type="entry name" value="Hen1"/>
</dbReference>
<dbReference type="InterPro" id="IPR029063">
    <property type="entry name" value="SAM-dependent_MTases_sf"/>
</dbReference>
<dbReference type="PANTHER" id="PTHR21404">
    <property type="entry name" value="HEN1"/>
    <property type="match status" value="1"/>
</dbReference>
<dbReference type="PANTHER" id="PTHR21404:SF3">
    <property type="entry name" value="SMALL RNA 2'-O-METHYLTRANSFERASE"/>
    <property type="match status" value="1"/>
</dbReference>
<dbReference type="SUPFAM" id="SSF53335">
    <property type="entry name" value="S-adenosyl-L-methionine-dependent methyltransferases"/>
    <property type="match status" value="1"/>
</dbReference>
<feature type="chain" id="PRO_0000406963" description="Small RNA 2'-O-methyltransferase">
    <location>
        <begin position="1"/>
        <end position="391"/>
    </location>
</feature>
<feature type="region of interest" description="Disordered" evidence="2">
    <location>
        <begin position="354"/>
        <end position="391"/>
    </location>
</feature>
<feature type="compositionally biased region" description="Acidic residues" evidence="2">
    <location>
        <begin position="374"/>
        <end position="384"/>
    </location>
</feature>
<feature type="binding site" evidence="1">
    <location>
        <position position="76"/>
    </location>
    <ligand>
        <name>S-adenosyl-L-methionine</name>
        <dbReference type="ChEBI" id="CHEBI:59789"/>
    </ligand>
</feature>
<feature type="binding site" evidence="1">
    <location>
        <position position="130"/>
    </location>
    <ligand>
        <name>Mg(2+)</name>
        <dbReference type="ChEBI" id="CHEBI:18420"/>
    </ligand>
</feature>
<feature type="binding site" evidence="1">
    <location>
        <position position="133"/>
    </location>
    <ligand>
        <name>Mg(2+)</name>
        <dbReference type="ChEBI" id="CHEBI:18420"/>
    </ligand>
</feature>
<feature type="binding site" evidence="1">
    <location>
        <position position="134"/>
    </location>
    <ligand>
        <name>Mg(2+)</name>
        <dbReference type="ChEBI" id="CHEBI:18420"/>
    </ligand>
</feature>
<feature type="binding site" evidence="1">
    <location>
        <position position="185"/>
    </location>
    <ligand>
        <name>Mg(2+)</name>
        <dbReference type="ChEBI" id="CHEBI:18420"/>
    </ligand>
</feature>
<organism>
    <name type="scientific">Drosophila melanogaster</name>
    <name type="common">Fruit fly</name>
    <dbReference type="NCBI Taxonomy" id="7227"/>
    <lineage>
        <taxon>Eukaryota</taxon>
        <taxon>Metazoa</taxon>
        <taxon>Ecdysozoa</taxon>
        <taxon>Arthropoda</taxon>
        <taxon>Hexapoda</taxon>
        <taxon>Insecta</taxon>
        <taxon>Pterygota</taxon>
        <taxon>Neoptera</taxon>
        <taxon>Endopterygota</taxon>
        <taxon>Diptera</taxon>
        <taxon>Brachycera</taxon>
        <taxon>Muscomorpha</taxon>
        <taxon>Ephydroidea</taxon>
        <taxon>Drosophilidae</taxon>
        <taxon>Drosophila</taxon>
        <taxon>Sophophora</taxon>
    </lineage>
</organism>
<name>HENMT_DROME</name>
<evidence type="ECO:0000250" key="1"/>
<evidence type="ECO:0000256" key="2">
    <source>
        <dbReference type="SAM" id="MobiDB-lite"/>
    </source>
</evidence>
<evidence type="ECO:0000269" key="3">
    <source>
    </source>
</evidence>
<evidence type="ECO:0000269" key="4">
    <source>
    </source>
</evidence>
<evidence type="ECO:0000269" key="5">
    <source>
    </source>
</evidence>
<evidence type="ECO:0000269" key="6">
    <source>
    </source>
</evidence>
<evidence type="ECO:0000305" key="7"/>
<sequence length="391" mass="45570">MFSHKFICGSLTKMTETGITFDPPVYEQRYCATIQILEDARWKDQIKKVVEFGCAEMRFFQLMRRIETIEHIGLVDIDKSLLMRNLTSVNPLVSDYIRSRASPLKVQILQGNVADSSEELRDTDAVIAIELIEHVYDDVLAKIPVNIFGFMQPKLVVFSTPNSDFNVIFTRFNPLLPNGFRHEDHKFEWSRDEFKNWCLGIVEKYPNYMFSLTGVGNPPKEYESVGPVSQIAIFVRKDMLEMQLVNPLVSKPNIDKESIPYKLIHTVEYPFYVDTRTEKEKLWTEVQIELQRFKRQFESSEIEEGTYQDTCNMPIAFLLDRLEHVGATKERIEELLLENNLTVENECVLIVSSDQESEWSDPYKFSDRSSQDDALVDQEQEEERWDQGPES</sequence>
<proteinExistence type="evidence at protein level"/>
<reference key="1">
    <citation type="journal article" date="2000" name="Science">
        <title>The genome sequence of Drosophila melanogaster.</title>
        <authorList>
            <person name="Adams M.D."/>
            <person name="Celniker S.E."/>
            <person name="Holt R.A."/>
            <person name="Evans C.A."/>
            <person name="Gocayne J.D."/>
            <person name="Amanatides P.G."/>
            <person name="Scherer S.E."/>
            <person name="Li P.W."/>
            <person name="Hoskins R.A."/>
            <person name="Galle R.F."/>
            <person name="George R.A."/>
            <person name="Lewis S.E."/>
            <person name="Richards S."/>
            <person name="Ashburner M."/>
            <person name="Henderson S.N."/>
            <person name="Sutton G.G."/>
            <person name="Wortman J.R."/>
            <person name="Yandell M.D."/>
            <person name="Zhang Q."/>
            <person name="Chen L.X."/>
            <person name="Brandon R.C."/>
            <person name="Rogers Y.-H.C."/>
            <person name="Blazej R.G."/>
            <person name="Champe M."/>
            <person name="Pfeiffer B.D."/>
            <person name="Wan K.H."/>
            <person name="Doyle C."/>
            <person name="Baxter E.G."/>
            <person name="Helt G."/>
            <person name="Nelson C.R."/>
            <person name="Miklos G.L.G."/>
            <person name="Abril J.F."/>
            <person name="Agbayani A."/>
            <person name="An H.-J."/>
            <person name="Andrews-Pfannkoch C."/>
            <person name="Baldwin D."/>
            <person name="Ballew R.M."/>
            <person name="Basu A."/>
            <person name="Baxendale J."/>
            <person name="Bayraktaroglu L."/>
            <person name="Beasley E.M."/>
            <person name="Beeson K.Y."/>
            <person name="Benos P.V."/>
            <person name="Berman B.P."/>
            <person name="Bhandari D."/>
            <person name="Bolshakov S."/>
            <person name="Borkova D."/>
            <person name="Botchan M.R."/>
            <person name="Bouck J."/>
            <person name="Brokstein P."/>
            <person name="Brottier P."/>
            <person name="Burtis K.C."/>
            <person name="Busam D.A."/>
            <person name="Butler H."/>
            <person name="Cadieu E."/>
            <person name="Center A."/>
            <person name="Chandra I."/>
            <person name="Cherry J.M."/>
            <person name="Cawley S."/>
            <person name="Dahlke C."/>
            <person name="Davenport L.B."/>
            <person name="Davies P."/>
            <person name="de Pablos B."/>
            <person name="Delcher A."/>
            <person name="Deng Z."/>
            <person name="Mays A.D."/>
            <person name="Dew I."/>
            <person name="Dietz S.M."/>
            <person name="Dodson K."/>
            <person name="Doup L.E."/>
            <person name="Downes M."/>
            <person name="Dugan-Rocha S."/>
            <person name="Dunkov B.C."/>
            <person name="Dunn P."/>
            <person name="Durbin K.J."/>
            <person name="Evangelista C.C."/>
            <person name="Ferraz C."/>
            <person name="Ferriera S."/>
            <person name="Fleischmann W."/>
            <person name="Fosler C."/>
            <person name="Gabrielian A.E."/>
            <person name="Garg N.S."/>
            <person name="Gelbart W.M."/>
            <person name="Glasser K."/>
            <person name="Glodek A."/>
            <person name="Gong F."/>
            <person name="Gorrell J.H."/>
            <person name="Gu Z."/>
            <person name="Guan P."/>
            <person name="Harris M."/>
            <person name="Harris N.L."/>
            <person name="Harvey D.A."/>
            <person name="Heiman T.J."/>
            <person name="Hernandez J.R."/>
            <person name="Houck J."/>
            <person name="Hostin D."/>
            <person name="Houston K.A."/>
            <person name="Howland T.J."/>
            <person name="Wei M.-H."/>
            <person name="Ibegwam C."/>
            <person name="Jalali M."/>
            <person name="Kalush F."/>
            <person name="Karpen G.H."/>
            <person name="Ke Z."/>
            <person name="Kennison J.A."/>
            <person name="Ketchum K.A."/>
            <person name="Kimmel B.E."/>
            <person name="Kodira C.D."/>
            <person name="Kraft C.L."/>
            <person name="Kravitz S."/>
            <person name="Kulp D."/>
            <person name="Lai Z."/>
            <person name="Lasko P."/>
            <person name="Lei Y."/>
            <person name="Levitsky A.A."/>
            <person name="Li J.H."/>
            <person name="Li Z."/>
            <person name="Liang Y."/>
            <person name="Lin X."/>
            <person name="Liu X."/>
            <person name="Mattei B."/>
            <person name="McIntosh T.C."/>
            <person name="McLeod M.P."/>
            <person name="McPherson D."/>
            <person name="Merkulov G."/>
            <person name="Milshina N.V."/>
            <person name="Mobarry C."/>
            <person name="Morris J."/>
            <person name="Moshrefi A."/>
            <person name="Mount S.M."/>
            <person name="Moy M."/>
            <person name="Murphy B."/>
            <person name="Murphy L."/>
            <person name="Muzny D.M."/>
            <person name="Nelson D.L."/>
            <person name="Nelson D.R."/>
            <person name="Nelson K.A."/>
            <person name="Nixon K."/>
            <person name="Nusskern D.R."/>
            <person name="Pacleb J.M."/>
            <person name="Palazzolo M."/>
            <person name="Pittman G.S."/>
            <person name="Pan S."/>
            <person name="Pollard J."/>
            <person name="Puri V."/>
            <person name="Reese M.G."/>
            <person name="Reinert K."/>
            <person name="Remington K."/>
            <person name="Saunders R.D.C."/>
            <person name="Scheeler F."/>
            <person name="Shen H."/>
            <person name="Shue B.C."/>
            <person name="Siden-Kiamos I."/>
            <person name="Simpson M."/>
            <person name="Skupski M.P."/>
            <person name="Smith T.J."/>
            <person name="Spier E."/>
            <person name="Spradling A.C."/>
            <person name="Stapleton M."/>
            <person name="Strong R."/>
            <person name="Sun E."/>
            <person name="Svirskas R."/>
            <person name="Tector C."/>
            <person name="Turner R."/>
            <person name="Venter E."/>
            <person name="Wang A.H."/>
            <person name="Wang X."/>
            <person name="Wang Z.-Y."/>
            <person name="Wassarman D.A."/>
            <person name="Weinstock G.M."/>
            <person name="Weissenbach J."/>
            <person name="Williams S.M."/>
            <person name="Woodage T."/>
            <person name="Worley K.C."/>
            <person name="Wu D."/>
            <person name="Yang S."/>
            <person name="Yao Q.A."/>
            <person name="Ye J."/>
            <person name="Yeh R.-F."/>
            <person name="Zaveri J.S."/>
            <person name="Zhan M."/>
            <person name="Zhang G."/>
            <person name="Zhao Q."/>
            <person name="Zheng L."/>
            <person name="Zheng X.H."/>
            <person name="Zhong F.N."/>
            <person name="Zhong W."/>
            <person name="Zhou X."/>
            <person name="Zhu S.C."/>
            <person name="Zhu X."/>
            <person name="Smith H.O."/>
            <person name="Gibbs R.A."/>
            <person name="Myers E.W."/>
            <person name="Rubin G.M."/>
            <person name="Venter J.C."/>
        </authorList>
    </citation>
    <scope>NUCLEOTIDE SEQUENCE [LARGE SCALE GENOMIC DNA]</scope>
    <source>
        <strain>Berkeley</strain>
    </source>
</reference>
<reference key="2">
    <citation type="journal article" date="2002" name="Genome Biol.">
        <title>Annotation of the Drosophila melanogaster euchromatic genome: a systematic review.</title>
        <authorList>
            <person name="Misra S."/>
            <person name="Crosby M.A."/>
            <person name="Mungall C.J."/>
            <person name="Matthews B.B."/>
            <person name="Campbell K.S."/>
            <person name="Hradecky P."/>
            <person name="Huang Y."/>
            <person name="Kaminker J.S."/>
            <person name="Millburn G.H."/>
            <person name="Prochnik S.E."/>
            <person name="Smith C.D."/>
            <person name="Tupy J.L."/>
            <person name="Whitfield E.J."/>
            <person name="Bayraktaroglu L."/>
            <person name="Berman B.P."/>
            <person name="Bettencourt B.R."/>
            <person name="Celniker S.E."/>
            <person name="de Grey A.D.N.J."/>
            <person name="Drysdale R.A."/>
            <person name="Harris N.L."/>
            <person name="Richter J."/>
            <person name="Russo S."/>
            <person name="Schroeder A.J."/>
            <person name="Shu S.Q."/>
            <person name="Stapleton M."/>
            <person name="Yamada C."/>
            <person name="Ashburner M."/>
            <person name="Gelbart W.M."/>
            <person name="Rubin G.M."/>
            <person name="Lewis S.E."/>
        </authorList>
    </citation>
    <scope>GENOME REANNOTATION</scope>
    <source>
        <strain>Berkeley</strain>
    </source>
</reference>
<reference key="3">
    <citation type="journal article" date="2002" name="Genome Biol.">
        <title>A Drosophila full-length cDNA resource.</title>
        <authorList>
            <person name="Stapleton M."/>
            <person name="Carlson J.W."/>
            <person name="Brokstein P."/>
            <person name="Yu C."/>
            <person name="Champe M."/>
            <person name="George R.A."/>
            <person name="Guarin H."/>
            <person name="Kronmiller B."/>
            <person name="Pacleb J.M."/>
            <person name="Park S."/>
            <person name="Wan K.H."/>
            <person name="Rubin G.M."/>
            <person name="Celniker S.E."/>
        </authorList>
    </citation>
    <scope>NUCLEOTIDE SEQUENCE [LARGE SCALE MRNA]</scope>
    <source>
        <strain>Berkeley</strain>
        <tissue>Embryo</tissue>
    </source>
</reference>
<reference key="4">
    <citation type="journal article" date="2007" name="Curr. Biol.">
        <title>The Drosophila RNA methyltransferase, DmHen1, modifies germline piRNAs and single-stranded siRNAs in RISC.</title>
        <authorList>
            <person name="Horwich M.D."/>
            <person name="Li C."/>
            <person name="Matranga C."/>
            <person name="Vagin V."/>
            <person name="Farley G."/>
            <person name="Wang P."/>
            <person name="Zamore P.D."/>
        </authorList>
    </citation>
    <scope>FUNCTION</scope>
    <scope>CATALYTIC ACTIVITY</scope>
</reference>
<reference key="5">
    <citation type="journal article" date="2007" name="Genes Dev.">
        <title>Pimet, the Drosophila homolog of HEN1, mediates 2'-O-methylation of Piwi-interacting RNAs at their 3' ends.</title>
        <authorList>
            <person name="Saito K."/>
            <person name="Sakaguchi Y."/>
            <person name="Suzuki T."/>
            <person name="Suzuki T."/>
            <person name="Siomi H."/>
            <person name="Siomi M.C."/>
        </authorList>
    </citation>
    <scope>FUNCTION</scope>
    <scope>CATALYTIC ACTIVITY</scope>
</reference>
<reference key="6">
    <citation type="journal article" date="2008" name="Nature">
        <title>The Drosophila hairpin RNA pathway generates endogenous short interfering RNAs.</title>
        <authorList>
            <person name="Okamura K."/>
            <person name="Chung W.J."/>
            <person name="Ruby J.G."/>
            <person name="Guo H."/>
            <person name="Bartel D.P."/>
            <person name="Lai E.C."/>
        </authorList>
    </citation>
    <scope>FUNCTION</scope>
</reference>
<reference key="7">
    <citation type="journal article" date="2010" name="Science">
        <title>Target RNA-directed trimming and tailing of small silencing RNAs.</title>
        <authorList>
            <person name="Ameres S.L."/>
            <person name="Horwich M.D."/>
            <person name="Hung J.H."/>
            <person name="Xu J."/>
            <person name="Ghildiyal M."/>
            <person name="Weng Z."/>
            <person name="Zamore P.D."/>
        </authorList>
    </citation>
    <scope>FUNCTION</scope>
</reference>
<protein>
    <recommendedName>
        <fullName>Small RNA 2'-O-methyltransferase</fullName>
        <ecNumber evidence="3 4">2.1.1.386</ecNumber>
    </recommendedName>
    <alternativeName>
        <fullName>HEN1 methyltransferase homolog</fullName>
        <shortName>DmHen1</shortName>
    </alternativeName>
    <alternativeName>
        <fullName>piRNA methyltransferase</fullName>
    </alternativeName>
</protein>
<keyword id="KW-0460">Magnesium</keyword>
<keyword id="KW-0479">Metal-binding</keyword>
<keyword id="KW-0489">Methyltransferase</keyword>
<keyword id="KW-1185">Reference proteome</keyword>
<keyword id="KW-0694">RNA-binding</keyword>
<keyword id="KW-0943">RNA-mediated gene silencing</keyword>
<keyword id="KW-0949">S-adenosyl-L-methionine</keyword>
<keyword id="KW-0808">Transferase</keyword>
<gene>
    <name type="primary">Hen1</name>
    <name type="synonym">Pimet</name>
    <name type="ORF">CG12367</name>
</gene>
<comment type="function">
    <text evidence="3 4 5 6">Methyltransferase that adds a 2'-O-methyl group at the 3'-end of selected small RNAs. Mediates 2'-O-methylation of piRNAs, single-stranded siRNAs and long hairpin RNA genes (hpRNAs). Methylation protects the 3'-end of small RNAs from tailing and trimming and could constitute a recognition signal for appropriate argonaute machineries.</text>
</comment>
<comment type="catalytic activity">
    <reaction evidence="3 4">
        <text>small RNA 3'-end nucleotide + S-adenosyl-L-methionine = small RNA 3'-end 2'-O-methylnucleotide + S-adenosyl-L-homocysteine + H(+)</text>
        <dbReference type="Rhea" id="RHEA:37887"/>
        <dbReference type="Rhea" id="RHEA-COMP:10415"/>
        <dbReference type="Rhea" id="RHEA-COMP:10416"/>
        <dbReference type="ChEBI" id="CHEBI:15378"/>
        <dbReference type="ChEBI" id="CHEBI:57856"/>
        <dbReference type="ChEBI" id="CHEBI:59789"/>
        <dbReference type="ChEBI" id="CHEBI:74896"/>
        <dbReference type="ChEBI" id="CHEBI:74898"/>
        <dbReference type="EC" id="2.1.1.386"/>
    </reaction>
</comment>
<comment type="cofactor">
    <cofactor evidence="1">
        <name>Mg(2+)</name>
        <dbReference type="ChEBI" id="CHEBI:18420"/>
    </cofactor>
    <text evidence="1">Binds 1 Mg(2+) ion per subunit.</text>
</comment>
<comment type="similarity">
    <text evidence="7">Belongs to the methyltransferase superfamily. HEN1 family.</text>
</comment>
<accession>Q7K175</accession>